<keyword id="KW-0025">Alternative splicing</keyword>
<keyword id="KW-0067">ATP-binding</keyword>
<keyword id="KW-0225">Disease variant</keyword>
<keyword id="KW-0967">Endosome</keyword>
<keyword id="KW-0887">Epilepsy</keyword>
<keyword id="KW-0325">Glycoprotein</keyword>
<keyword id="KW-0991">Intellectual disability</keyword>
<keyword id="KW-0458">Lysosome</keyword>
<keyword id="KW-0472">Membrane</keyword>
<keyword id="KW-0488">Methylation</keyword>
<keyword id="KW-0547">Nucleotide-binding</keyword>
<keyword id="KW-0597">Phosphoprotein</keyword>
<keyword id="KW-1267">Proteomics identification</keyword>
<keyword id="KW-1185">Reference proteome</keyword>
<keyword id="KW-0677">Repeat</keyword>
<keyword id="KW-1278">Translocase</keyword>
<keyword id="KW-0812">Transmembrane</keyword>
<keyword id="KW-1133">Transmembrane helix</keyword>
<keyword id="KW-0813">Transport</keyword>
<feature type="chain" id="PRO_0000093290" description="ATP-binding cassette sub-family A member 2">
    <location>
        <begin position="1"/>
        <end position="2435"/>
    </location>
</feature>
<feature type="transmembrane region" description="Helical" evidence="2">
    <location>
        <begin position="22"/>
        <end position="42"/>
    </location>
</feature>
<feature type="transmembrane region" description="Helical" evidence="2">
    <location>
        <begin position="54"/>
        <end position="74"/>
    </location>
</feature>
<feature type="transmembrane region" description="Helical" evidence="2">
    <location>
        <begin position="699"/>
        <end position="719"/>
    </location>
</feature>
<feature type="transmembrane region" description="Helical" evidence="2">
    <location>
        <begin position="750"/>
        <end position="770"/>
    </location>
</feature>
<feature type="transmembrane region" description="Helical" evidence="2">
    <location>
        <begin position="782"/>
        <end position="802"/>
    </location>
</feature>
<feature type="transmembrane region" description="Helical" evidence="2">
    <location>
        <begin position="813"/>
        <end position="833"/>
    </location>
</feature>
<feature type="transmembrane region" description="Helical" evidence="2">
    <location>
        <begin position="857"/>
        <end position="877"/>
    </location>
</feature>
<feature type="transmembrane region" description="Helical" evidence="2">
    <location>
        <begin position="893"/>
        <end position="913"/>
    </location>
</feature>
<feature type="transmembrane region" description="Helical" evidence="2">
    <location>
        <begin position="1456"/>
        <end position="1476"/>
    </location>
</feature>
<feature type="transmembrane region" description="Helical" evidence="2">
    <location>
        <begin position="1792"/>
        <end position="1812"/>
    </location>
</feature>
<feature type="transmembrane region" description="Helical" evidence="2">
    <location>
        <begin position="1841"/>
        <end position="1861"/>
    </location>
</feature>
<feature type="transmembrane region" description="Helical" evidence="2">
    <location>
        <begin position="1872"/>
        <end position="1892"/>
    </location>
</feature>
<feature type="transmembrane region" description="Helical" evidence="2">
    <location>
        <begin position="1905"/>
        <end position="1925"/>
    </location>
</feature>
<feature type="transmembrane region" description="Helical" evidence="2">
    <location>
        <begin position="1991"/>
        <end position="2011"/>
    </location>
</feature>
<feature type="domain" description="ABC transporter 1" evidence="3">
    <location>
        <begin position="990"/>
        <end position="1221"/>
    </location>
</feature>
<feature type="domain" description="ABC transporter 2" evidence="3">
    <location>
        <begin position="2050"/>
        <end position="2285"/>
    </location>
</feature>
<feature type="region of interest" description="Disordered" evidence="4">
    <location>
        <begin position="1223"/>
        <end position="1243"/>
    </location>
</feature>
<feature type="region of interest" description="Disordered" evidence="4">
    <location>
        <begin position="1325"/>
        <end position="1357"/>
    </location>
</feature>
<feature type="region of interest" description="Disordered" evidence="4">
    <location>
        <begin position="1586"/>
        <end position="1610"/>
    </location>
</feature>
<feature type="compositionally biased region" description="Basic and acidic residues" evidence="4">
    <location>
        <begin position="1333"/>
        <end position="1342"/>
    </location>
</feature>
<feature type="compositionally biased region" description="Pro residues" evidence="4">
    <location>
        <begin position="1589"/>
        <end position="1598"/>
    </location>
</feature>
<feature type="binding site" evidence="3">
    <location>
        <begin position="1024"/>
        <end position="1031"/>
    </location>
    <ligand>
        <name>ATP</name>
        <dbReference type="ChEBI" id="CHEBI:30616"/>
        <label>1</label>
    </ligand>
</feature>
<feature type="binding site" evidence="3">
    <location>
        <begin position="2087"/>
        <end position="2094"/>
    </location>
    <ligand>
        <name>ATP</name>
        <dbReference type="ChEBI" id="CHEBI:30616"/>
        <label>2</label>
    </ligand>
</feature>
<feature type="modified residue" description="N5-methylglutamine" evidence="12">
    <location>
        <position position="271"/>
    </location>
</feature>
<feature type="modified residue" description="Phosphoserine" evidence="25">
    <location>
        <position position="1238"/>
    </location>
</feature>
<feature type="modified residue" description="Phosphoserine" evidence="23">
    <location>
        <position position="1327"/>
    </location>
</feature>
<feature type="modified residue" description="Phosphoserine" evidence="23 26">
    <location>
        <position position="1331"/>
    </location>
</feature>
<feature type="modified residue" description="Phosphothreonine" evidence="24">
    <location>
        <position position="2412"/>
    </location>
</feature>
<feature type="glycosylation site" description="N-linked (GlcNAc...) asparagine" evidence="2">
    <location>
        <position position="14"/>
    </location>
</feature>
<feature type="glycosylation site" description="N-linked (GlcNAc...) asparagine" evidence="2">
    <location>
        <position position="89"/>
    </location>
</feature>
<feature type="glycosylation site" description="N-linked (GlcNAc...) asparagine" evidence="2">
    <location>
        <position position="168"/>
    </location>
</feature>
<feature type="glycosylation site" description="N-linked (GlcNAc...) asparagine" evidence="2">
    <location>
        <position position="173"/>
    </location>
</feature>
<feature type="glycosylation site" description="N-linked (GlcNAc...) asparagine" evidence="2">
    <location>
        <position position="305"/>
    </location>
</feature>
<feature type="glycosylation site" description="N-linked (GlcNAc...) asparagine" evidence="2">
    <location>
        <position position="368"/>
    </location>
</feature>
<feature type="glycosylation site" description="N-linked (GlcNAc...) asparagine" evidence="2">
    <location>
        <position position="379"/>
    </location>
</feature>
<feature type="glycosylation site" description="N-linked (GlcNAc...) asparagine" evidence="2">
    <location>
        <position position="420"/>
    </location>
</feature>
<feature type="glycosylation site" description="N-linked (GlcNAc...) asparagine" evidence="2">
    <location>
        <position position="432"/>
    </location>
</feature>
<feature type="glycosylation site" description="N-linked (GlcNAc...) asparagine" evidence="2">
    <location>
        <position position="476"/>
    </location>
</feature>
<feature type="glycosylation site" description="N-linked (GlcNAc...) asparagine" evidence="2">
    <location>
        <position position="484"/>
    </location>
</feature>
<feature type="glycosylation site" description="N-linked (GlcNAc...) asparagine" evidence="2">
    <location>
        <position position="494"/>
    </location>
</feature>
<feature type="glycosylation site" description="N-linked (GlcNAc...) asparagine" evidence="2">
    <location>
        <position position="530"/>
    </location>
</feature>
<feature type="glycosylation site" description="N-linked (GlcNAc...) asparagine" evidence="2">
    <location>
        <position position="544"/>
    </location>
</feature>
<feature type="glycosylation site" description="N-linked (GlcNAc...) asparagine" evidence="2">
    <location>
        <position position="590"/>
    </location>
</feature>
<feature type="glycosylation site" description="N-linked (GlcNAc...) asparagine" evidence="2">
    <location>
        <position position="600"/>
    </location>
</feature>
<feature type="glycosylation site" description="N-linked (GlcNAc...) asparagine" evidence="2">
    <location>
        <position position="628"/>
    </location>
</feature>
<feature type="glycosylation site" description="N-linked (GlcNAc...) asparagine" evidence="2">
    <location>
        <position position="1408"/>
    </location>
</feature>
<feature type="glycosylation site" description="N-linked (GlcNAc...) asparagine" evidence="2">
    <location>
        <position position="1496"/>
    </location>
</feature>
<feature type="glycosylation site" description="N-linked (GlcNAc...) asparagine" evidence="2">
    <location>
        <position position="1549"/>
    </location>
</feature>
<feature type="glycosylation site" description="N-linked (GlcNAc...) asparagine" evidence="2">
    <location>
        <position position="1557"/>
    </location>
</feature>
<feature type="glycosylation site" description="N-linked (GlcNAc...) asparagine" evidence="2">
    <location>
        <position position="1612"/>
    </location>
</feature>
<feature type="glycosylation site" description="N-linked (GlcNAc...) asparagine" evidence="2">
    <location>
        <position position="1677"/>
    </location>
</feature>
<feature type="glycosylation site" description="N-linked (GlcNAc...) asparagine" evidence="2">
    <location>
        <position position="1775"/>
    </location>
</feature>
<feature type="glycosylation site" description="N-linked (GlcNAc...) asparagine" evidence="2">
    <location>
        <position position="2054"/>
    </location>
</feature>
<feature type="splice variant" id="VSP_060910" description="In isoform 4." evidence="18">
    <original>MGFLHQLQLLLWKNVTLKRRSP</original>
    <variation>MGRKTSRVQQGPPRSPACSAHGERSWGLEFPPFRWLLGIAGRTHLAALPPFQ</variation>
    <location>
        <begin position="1"/>
        <end position="22"/>
    </location>
</feature>
<feature type="splice variant" id="VSP_040937" description="In isoform 3 and isoform 4." evidence="16 17 20">
    <original>EA</original>
    <variation>EVS</variation>
    <location>
        <begin position="53"/>
        <end position="54"/>
    </location>
</feature>
<feature type="splice variant" id="VSP_035283" description="In isoform 2." evidence="15">
    <original>YKSRKIGRILAVDRLCLGVRPGECFGLLGVNG</original>
    <variation>GSGHVGWGLGGVGQGQGGGAPAVEVEPGWAGP</variation>
    <location>
        <begin position="2059"/>
        <end position="2090"/>
    </location>
</feature>
<feature type="splice variant" id="VSP_035284" description="In isoform 2." evidence="15">
    <location>
        <begin position="2091"/>
        <end position="2435"/>
    </location>
</feature>
<feature type="sequence variant" id="VAR_082138" description="In IDPOGSA; dbSNP:rs1588524458." evidence="14">
    <location>
        <begin position="343"/>
        <end position="2435"/>
    </location>
</feature>
<feature type="sequence variant" id="VAR_044526" description="In dbSNP:rs908828.">
    <original>P</original>
    <variation>H</variation>
    <location>
        <position position="583"/>
    </location>
</feature>
<feature type="sequence variant" id="VAR_044527" description="In dbSNP:rs2090625.">
    <original>F</original>
    <variation>V</variation>
    <location>
        <position position="674"/>
    </location>
</feature>
<feature type="mutagenesis site" description="Abolishes methylation by N6AMT1." evidence="12">
    <original>Q</original>
    <variation>R</variation>
    <location>
        <position position="271"/>
    </location>
</feature>
<feature type="sequence conflict" description="In Ref. 1; AAK14335." evidence="19" ref="1">
    <original>P</original>
    <variation>L</variation>
    <location>
        <position position="2079"/>
    </location>
</feature>
<feature type="sequence conflict" description="In Ref. 1; AAK14334/AAK14335 and 2; AAG09372." evidence="19" ref="1 2">
    <original>S</original>
    <variation>P</variation>
    <location sequence="Q9BZC7-3">
        <position position="55"/>
    </location>
</feature>
<proteinExistence type="evidence at protein level"/>
<name>ABCA2_HUMAN</name>
<sequence length="2435" mass="269833">MGFLHQLQLLLWKNVTLKRRSPWVLAFEIFIPLVLFFILLGLRQKKPTISVKEAFYTAAPLTSAGILPVMQSLCPDGQRDEFGFLQYANSTVTQLLERLDRVVEEGNLFDPARPSLGSELEALRQHLEALSAGPGTSGSHLDRSTVSSFSLDSVARNPQELWRFLTQNLSLPNSTAQALLAARVDPPEVYHLLFGPSSALDSQSGLHKGQEPWSRLGGNPLFRMEELLLAPALLEQLTCTPGSGELGRILTVPESQKGALQGYRDAVCSGQAAARARRFSGLSAELRNQLDVAKVSQQLGLDAPNGSDSSPQAPPPRRLQALLGDLLDAQKVLQDVDVLSALALLLPQGACTGRTPGPPASGAGGAANGTGAGAVMGPNATAEEGAPSAAALATPDTLQGQCSAFVQLWAGLQPILCGNNRTIEPEALRRGNMSSLGFTSKEQRNLGLLVHLMTSNPKILYAPAGSEVDRVILKANETFAFVGNVTHYAQVWLNISAEIRSFLEQGRLQQHLRWLQQYVAELRLHPEALNLSLDELPPALRQDNFSLPSGMALLQQLDTIDNAACGWIQFMSKVSVDIFKGFPDEESIVNYTLNQAYQDNVTVFASVIFQTRKDGSLPPHVHYKIRQNSSFTEKTNEIRRAYWRPGPNTGGRFYFLYGFVWIQDMMERAIIDTFVGHDVVEPGSYVQMFPYPCYTRDDFLFVIEHMMPLCMVISWVYSVAMTIQHIVAEKEHRLKEVMKTMGLNNAVHWVAWFITGFVQLSISVTALTAILKYGQVLMHSHVVIIWLFLAVYAVATIMFCFLVSVLYSKAKLASACGGIIYFLSYVPYMYVAIREEVAHDKITAFEKCIASLMSTTAFGLGSKYFALYEVAGVGIQWHTFSQSPVEGDDFNLLLAVTMLMVDAVVYGILTWYIEAVHPGMYGLPRPWYFPLQKSYWLGSGRTEAWEWSWPWARTPRLSVMEEDQACAMESRRFEETRGMEEEPTHLPLVVCVDKLTKVYKDDKKLALNKLSLNLYENQVVSFLGHNGAGKTTTMSILTGLFPPTSGSATIYGHDIRTEMDEIRKNLGMCPQHNVLFDRLTVEEHLWFYSRLKSMAQEEIRREMDKMIEDLELSNKRHSLVQTLSGGMKRKLSVAIAFVGGSRAIILDEPTAGVDPYARRAIWDLILKYKPGRTILLSTHHMDEADLLGDRIAIISHGKLKCCGSPLFLKGTYGDGYRLTLVKRPAEPGGPQEPGLASSPPGRAPLSSCSELQVSQFIRKHVASCLLVSDTSTELSYILPSEAAKKGAFERLFQHLERSLDALHLSSFGLMDTTLEEVFLKVSEEDQSLENSEADVKESRKDVLPGAEGPASGEGHAGNLARCSELTQSQASLQSASSVGSARGDEGAGYTDVYGDYRPLFDNPQDPDNVSLQEVEAEALSRVGQGSRKLDGGWLKVRQFHGLLVKRFHCARRNSKALFSQILLPAFFVCVAMTVALSVPEIGDLPPLVLSPSQYHNYTQPRGNFIPYANEERREYRLRLSPDASPQQLVSTFRLPSGVGATCVLKSPANGSLGPTLNLSSGESRLLAARFFDSMCLESFTQGLPLSNFVPPPPSPAPSDSPASPDEDLQAWNVSLPPTAGPEMWTSAPSLPRLVREPVRCTCSAQGTGFSCPSSVGGHPPQMRVVTGDILTDITGHNVSEYLLFTSDRFRLHRYGAITFGNVLKSIPASFGTRAPPMVRKIAVRRAAQVFYNNKGYHSMPTYLNSLNNAILRANLPKSKGNPAAYGITVTNHPMNKTSASLSLDYLLQGTDVVIAIFIIVAMSFVPASFVVFLVAEKSTKAKHLQFVSGCNPIIYWLANYVWDMLNYLVPATCCVIILFVFDLPAYTSPTNFPAVLSLFLLYGWSITPIMYPASFWFEVPSSAYVFLIVINLFIGITATVATFLLQLFEHDKDLKVVNSYLKSCFLIFPNYNLGHGLMEMAYNEYINEYYAKIGQFDKMKSPFEWDIVTRGLVAMAVEGVVGFLLTIMCQYNFLRRPQRMPVSTKPVEDDVDVASERQRVLRGDADNDMVKIENLTKVYKSRKIGRILAVDRLCLGVRPGECFGLLGVNGAGKTSTFKMLTGDESTTGGEAFVNGHSVLKELLQVQQSLGYCPQCDALFDELTAREHLQLYTRLRGISWKDEARVVKWALEKLELTKYADKPAGTYSGGNKRKLSTAIALIGYPAFIFLDEPTTGMDPKARRFLWNLILDLIKTGRSVVLTSHSMEECEALCTRLAIMVNGRLRCLGSIQHLKNRFGDGYMITVRTKSSQSVKDVVRFFNRNFPEAMLKERHHTKVQYQLKSEHISLAQVFSKMEQVSGVLGIEDYSVSQTTLDNVFVNFAKKQSDNLEQQETEPPSALQSPLGCLLSLLRPRSAPTELRALVADEPEDLDTEDEGLISFEEERAQLSFNTDTLC</sequence>
<evidence type="ECO:0000250" key="1">
    <source>
        <dbReference type="UniProtKB" id="P41234"/>
    </source>
</evidence>
<evidence type="ECO:0000255" key="2"/>
<evidence type="ECO:0000255" key="3">
    <source>
        <dbReference type="PROSITE-ProRule" id="PRU00434"/>
    </source>
</evidence>
<evidence type="ECO:0000256" key="4">
    <source>
        <dbReference type="SAM" id="MobiDB-lite"/>
    </source>
</evidence>
<evidence type="ECO:0000269" key="5">
    <source>
    </source>
</evidence>
<evidence type="ECO:0000269" key="6">
    <source>
    </source>
</evidence>
<evidence type="ECO:0000269" key="7">
    <source>
    </source>
</evidence>
<evidence type="ECO:0000269" key="8">
    <source>
    </source>
</evidence>
<evidence type="ECO:0000269" key="9">
    <source>
    </source>
</evidence>
<evidence type="ECO:0000269" key="10">
    <source>
    </source>
</evidence>
<evidence type="ECO:0000269" key="11">
    <source>
    </source>
</evidence>
<evidence type="ECO:0000269" key="12">
    <source>
    </source>
</evidence>
<evidence type="ECO:0000269" key="13">
    <source>
    </source>
</evidence>
<evidence type="ECO:0000269" key="14">
    <source>
    </source>
</evidence>
<evidence type="ECO:0000303" key="15">
    <source>
    </source>
</evidence>
<evidence type="ECO:0000303" key="16">
    <source>
    </source>
</evidence>
<evidence type="ECO:0000303" key="17">
    <source>
    </source>
</evidence>
<evidence type="ECO:0000303" key="18">
    <source>
    </source>
</evidence>
<evidence type="ECO:0000305" key="19"/>
<evidence type="ECO:0000305" key="20">
    <source>
    </source>
</evidence>
<evidence type="ECO:0000305" key="21">
    <source>
    </source>
</evidence>
<evidence type="ECO:0000312" key="22">
    <source>
        <dbReference type="HGNC" id="HGNC:32"/>
    </source>
</evidence>
<evidence type="ECO:0007744" key="23">
    <source>
    </source>
</evidence>
<evidence type="ECO:0007744" key="24">
    <source>
    </source>
</evidence>
<evidence type="ECO:0007744" key="25">
    <source>
    </source>
</evidence>
<evidence type="ECO:0007744" key="26">
    <source>
    </source>
</evidence>
<accession>Q9BZC7</accession>
<accession>A6NED5</accession>
<accession>Q5SPY5</accession>
<accession>Q5W9G5</accession>
<accession>Q76MW7</accession>
<accession>Q9HC28</accession>
<comment type="function">
    <text evidence="1 7 8 9 10 11 21">Probable lipid transporter that modulates cholesterol sequestration in the late endosome/lysosome by regulating the intracellular sphingolipid metabolism, in turn participates in cholesterol homeostasis (Probable) (PubMed:15238223, PubMed:21810484, PubMed:24201375). May alter the transbilayer distribution of ceramide in the intraluminal membrane lipid bilayer, favoring its retention in the outer leaflet that results in increased acid ceramidase activity in the late endosome/lysosome, facilitating ceramide deacylation to sphingosine leading to the sequestration of free cholesterol in lysosomes (PubMed:24201375). In addition regulates amyloid-beta production either by activating a signaling pathway that regulates amyloid precursor protein transcription through the modulation of sphingolipid metabolism or through its role in gamma-secretase processing of APP (PubMed:22086926, PubMed:26510981). May play a role in myelin formation (By similarity).</text>
</comment>
<comment type="subcellular location">
    <subcellularLocation>
        <location evidence="5 6">Endosome membrane</location>
        <topology evidence="5">Multi-pass membrane protein</topology>
    </subcellularLocation>
    <subcellularLocation>
        <location evidence="5 6">Lysosome membrane</location>
        <topology evidence="5">Multi-pass membrane protein</topology>
    </subcellularLocation>
    <text evidence="5">Forms discrete, punctate intracellular vesicles.</text>
</comment>
<comment type="alternative products">
    <event type="alternative splicing"/>
    <isoform>
        <id>Q9BZC7-1</id>
        <name>1</name>
        <sequence type="displayed"/>
    </isoform>
    <isoform>
        <id>Q9BZC7-2</id>
        <name>2</name>
        <sequence type="described" ref="VSP_035283 VSP_035284"/>
    </isoform>
    <isoform>
        <id>Q9BZC7-3</id>
        <name>3</name>
        <name evidence="18">1A form</name>
        <sequence type="described" ref="VSP_040937"/>
    </isoform>
    <isoform>
        <id>Q9BZC7-4</id>
        <name evidence="18">4</name>
        <name evidence="18">1B form</name>
        <sequence type="described" ref="VSP_060910 VSP_040937"/>
    </isoform>
</comment>
<comment type="tissue specificity">
    <molecule>Isoform 3</molecule>
    <text evidence="5 6">Highly expressed in the brain,peripheral blood leukocytes and ovary, whereas lower levels of expression is observed in kidney and liver.</text>
</comment>
<comment type="tissue specificity">
    <molecule>Isoform 4</molecule>
    <text evidence="6">Weakly expressed in brain and highly in peripheral blood leukocytes.</text>
</comment>
<comment type="induction">
    <text evidence="7">Increased under sterol-deprived conditions and decreased by the addition of exogenous sterols.</text>
</comment>
<comment type="PTM">
    <text evidence="12">Methylated at Gln-271 by N6AMT1.</text>
</comment>
<comment type="disease" evidence="13 14">
    <disease id="DI-05788">
        <name>Intellectual developmental disorder with poor growth and with or without seizures or ataxia</name>
        <acronym>IDPOGSA</acronym>
        <description>An autosomal recessive disorder characterized by global developmental delay apparent from infancy, impaired intellectual development, hypotonia, and poor overall growth with microcephaly. Additional variable features include dysmorphic features, cataracts, ataxia and seizures.</description>
        <dbReference type="MIM" id="618808"/>
    </disease>
    <text>The disease is caused by variants affecting the gene represented in this entry.</text>
</comment>
<comment type="similarity">
    <text evidence="19">Belongs to the ABC transporter superfamily. ABCA family.</text>
</comment>
<comment type="online information" name="ABCMdb">
    <link uri="http://abcm2.hegelab.org/search"/>
    <text>Database for mutations in ABC proteins</text>
</comment>
<dbReference type="EC" id="7.6.2.-" evidence="21"/>
<dbReference type="EMBL" id="AF327657">
    <property type="protein sequence ID" value="AAK14334.1"/>
    <property type="molecule type" value="mRNA"/>
</dbReference>
<dbReference type="EMBL" id="AF327705">
    <property type="protein sequence ID" value="AAK14335.1"/>
    <property type="molecule type" value="Genomic_DNA"/>
</dbReference>
<dbReference type="EMBL" id="AF327658">
    <property type="protein sequence ID" value="AAK14335.1"/>
    <property type="status" value="JOINED"/>
    <property type="molecule type" value="Genomic_DNA"/>
</dbReference>
<dbReference type="EMBL" id="AF327659">
    <property type="protein sequence ID" value="AAK14335.1"/>
    <property type="status" value="JOINED"/>
    <property type="molecule type" value="Genomic_DNA"/>
</dbReference>
<dbReference type="EMBL" id="AF327660">
    <property type="protein sequence ID" value="AAK14335.1"/>
    <property type="status" value="JOINED"/>
    <property type="molecule type" value="Genomic_DNA"/>
</dbReference>
<dbReference type="EMBL" id="AF327661">
    <property type="protein sequence ID" value="AAK14335.1"/>
    <property type="status" value="JOINED"/>
    <property type="molecule type" value="Genomic_DNA"/>
</dbReference>
<dbReference type="EMBL" id="AF327662">
    <property type="protein sequence ID" value="AAK14335.1"/>
    <property type="status" value="JOINED"/>
    <property type="molecule type" value="Genomic_DNA"/>
</dbReference>
<dbReference type="EMBL" id="AF327663">
    <property type="protein sequence ID" value="AAK14335.1"/>
    <property type="status" value="JOINED"/>
    <property type="molecule type" value="Genomic_DNA"/>
</dbReference>
<dbReference type="EMBL" id="AF327664">
    <property type="protein sequence ID" value="AAK14335.1"/>
    <property type="status" value="JOINED"/>
    <property type="molecule type" value="Genomic_DNA"/>
</dbReference>
<dbReference type="EMBL" id="AF327665">
    <property type="protein sequence ID" value="AAK14335.1"/>
    <property type="status" value="JOINED"/>
    <property type="molecule type" value="Genomic_DNA"/>
</dbReference>
<dbReference type="EMBL" id="AF327666">
    <property type="protein sequence ID" value="AAK14335.1"/>
    <property type="status" value="JOINED"/>
    <property type="molecule type" value="Genomic_DNA"/>
</dbReference>
<dbReference type="EMBL" id="AF327667">
    <property type="protein sequence ID" value="AAK14335.1"/>
    <property type="status" value="JOINED"/>
    <property type="molecule type" value="Genomic_DNA"/>
</dbReference>
<dbReference type="EMBL" id="AF327668">
    <property type="protein sequence ID" value="AAK14335.1"/>
    <property type="status" value="JOINED"/>
    <property type="molecule type" value="Genomic_DNA"/>
</dbReference>
<dbReference type="EMBL" id="AF327669">
    <property type="protein sequence ID" value="AAK14335.1"/>
    <property type="status" value="JOINED"/>
    <property type="molecule type" value="Genomic_DNA"/>
</dbReference>
<dbReference type="EMBL" id="AF327670">
    <property type="protein sequence ID" value="AAK14335.1"/>
    <property type="status" value="JOINED"/>
    <property type="molecule type" value="Genomic_DNA"/>
</dbReference>
<dbReference type="EMBL" id="AF327671">
    <property type="protein sequence ID" value="AAK14335.1"/>
    <property type="status" value="JOINED"/>
    <property type="molecule type" value="Genomic_DNA"/>
</dbReference>
<dbReference type="EMBL" id="AF327672">
    <property type="protein sequence ID" value="AAK14335.1"/>
    <property type="status" value="JOINED"/>
    <property type="molecule type" value="Genomic_DNA"/>
</dbReference>
<dbReference type="EMBL" id="AF327673">
    <property type="protein sequence ID" value="AAK14335.1"/>
    <property type="status" value="JOINED"/>
    <property type="molecule type" value="Genomic_DNA"/>
</dbReference>
<dbReference type="EMBL" id="AF327674">
    <property type="protein sequence ID" value="AAK14335.1"/>
    <property type="status" value="JOINED"/>
    <property type="molecule type" value="Genomic_DNA"/>
</dbReference>
<dbReference type="EMBL" id="AF327675">
    <property type="protein sequence ID" value="AAK14335.1"/>
    <property type="status" value="JOINED"/>
    <property type="molecule type" value="Genomic_DNA"/>
</dbReference>
<dbReference type="EMBL" id="AF327676">
    <property type="protein sequence ID" value="AAK14335.1"/>
    <property type="status" value="JOINED"/>
    <property type="molecule type" value="Genomic_DNA"/>
</dbReference>
<dbReference type="EMBL" id="AF327677">
    <property type="protein sequence ID" value="AAK14335.1"/>
    <property type="status" value="JOINED"/>
    <property type="molecule type" value="Genomic_DNA"/>
</dbReference>
<dbReference type="EMBL" id="AF327678">
    <property type="protein sequence ID" value="AAK14335.1"/>
    <property type="status" value="JOINED"/>
    <property type="molecule type" value="Genomic_DNA"/>
</dbReference>
<dbReference type="EMBL" id="AF327679">
    <property type="protein sequence ID" value="AAK14335.1"/>
    <property type="status" value="JOINED"/>
    <property type="molecule type" value="Genomic_DNA"/>
</dbReference>
<dbReference type="EMBL" id="AF327680">
    <property type="protein sequence ID" value="AAK14335.1"/>
    <property type="status" value="JOINED"/>
    <property type="molecule type" value="Genomic_DNA"/>
</dbReference>
<dbReference type="EMBL" id="AF327681">
    <property type="protein sequence ID" value="AAK14335.1"/>
    <property type="status" value="JOINED"/>
    <property type="molecule type" value="Genomic_DNA"/>
</dbReference>
<dbReference type="EMBL" id="AF327682">
    <property type="protein sequence ID" value="AAK14335.1"/>
    <property type="status" value="JOINED"/>
    <property type="molecule type" value="Genomic_DNA"/>
</dbReference>
<dbReference type="EMBL" id="AF327683">
    <property type="protein sequence ID" value="AAK14335.1"/>
    <property type="status" value="JOINED"/>
    <property type="molecule type" value="Genomic_DNA"/>
</dbReference>
<dbReference type="EMBL" id="AF327684">
    <property type="protein sequence ID" value="AAK14335.1"/>
    <property type="status" value="JOINED"/>
    <property type="molecule type" value="Genomic_DNA"/>
</dbReference>
<dbReference type="EMBL" id="AF327685">
    <property type="protein sequence ID" value="AAK14335.1"/>
    <property type="status" value="JOINED"/>
    <property type="molecule type" value="Genomic_DNA"/>
</dbReference>
<dbReference type="EMBL" id="AF327686">
    <property type="protein sequence ID" value="AAK14335.1"/>
    <property type="status" value="JOINED"/>
    <property type="molecule type" value="Genomic_DNA"/>
</dbReference>
<dbReference type="EMBL" id="AF327687">
    <property type="protein sequence ID" value="AAK14335.1"/>
    <property type="status" value="JOINED"/>
    <property type="molecule type" value="Genomic_DNA"/>
</dbReference>
<dbReference type="EMBL" id="AF327688">
    <property type="protein sequence ID" value="AAK14335.1"/>
    <property type="status" value="JOINED"/>
    <property type="molecule type" value="Genomic_DNA"/>
</dbReference>
<dbReference type="EMBL" id="AF327689">
    <property type="protein sequence ID" value="AAK14335.1"/>
    <property type="status" value="JOINED"/>
    <property type="molecule type" value="Genomic_DNA"/>
</dbReference>
<dbReference type="EMBL" id="AF327690">
    <property type="protein sequence ID" value="AAK14335.1"/>
    <property type="status" value="JOINED"/>
    <property type="molecule type" value="Genomic_DNA"/>
</dbReference>
<dbReference type="EMBL" id="AF327691">
    <property type="protein sequence ID" value="AAK14335.1"/>
    <property type="status" value="JOINED"/>
    <property type="molecule type" value="Genomic_DNA"/>
</dbReference>
<dbReference type="EMBL" id="AF327692">
    <property type="protein sequence ID" value="AAK14335.1"/>
    <property type="status" value="JOINED"/>
    <property type="molecule type" value="Genomic_DNA"/>
</dbReference>
<dbReference type="EMBL" id="AF327693">
    <property type="protein sequence ID" value="AAK14335.1"/>
    <property type="status" value="JOINED"/>
    <property type="molecule type" value="Genomic_DNA"/>
</dbReference>
<dbReference type="EMBL" id="AF327694">
    <property type="protein sequence ID" value="AAK14335.1"/>
    <property type="status" value="JOINED"/>
    <property type="molecule type" value="Genomic_DNA"/>
</dbReference>
<dbReference type="EMBL" id="AF327695">
    <property type="protein sequence ID" value="AAK14335.1"/>
    <property type="status" value="JOINED"/>
    <property type="molecule type" value="Genomic_DNA"/>
</dbReference>
<dbReference type="EMBL" id="AF327696">
    <property type="protein sequence ID" value="AAK14335.1"/>
    <property type="status" value="JOINED"/>
    <property type="molecule type" value="Genomic_DNA"/>
</dbReference>
<dbReference type="EMBL" id="AF327697">
    <property type="protein sequence ID" value="AAK14335.1"/>
    <property type="status" value="JOINED"/>
    <property type="molecule type" value="Genomic_DNA"/>
</dbReference>
<dbReference type="EMBL" id="AF327698">
    <property type="protein sequence ID" value="AAK14335.1"/>
    <property type="status" value="JOINED"/>
    <property type="molecule type" value="Genomic_DNA"/>
</dbReference>
<dbReference type="EMBL" id="AF327699">
    <property type="protein sequence ID" value="AAK14335.1"/>
    <property type="status" value="JOINED"/>
    <property type="molecule type" value="Genomic_DNA"/>
</dbReference>
<dbReference type="EMBL" id="AF327700">
    <property type="protein sequence ID" value="AAK14335.1"/>
    <property type="status" value="JOINED"/>
    <property type="molecule type" value="Genomic_DNA"/>
</dbReference>
<dbReference type="EMBL" id="AF327701">
    <property type="protein sequence ID" value="AAK14335.1"/>
    <property type="status" value="JOINED"/>
    <property type="molecule type" value="Genomic_DNA"/>
</dbReference>
<dbReference type="EMBL" id="AF327702">
    <property type="protein sequence ID" value="AAK14335.1"/>
    <property type="status" value="JOINED"/>
    <property type="molecule type" value="Genomic_DNA"/>
</dbReference>
<dbReference type="EMBL" id="AF327703">
    <property type="protein sequence ID" value="AAK14335.1"/>
    <property type="status" value="JOINED"/>
    <property type="molecule type" value="Genomic_DNA"/>
</dbReference>
<dbReference type="EMBL" id="AF327704">
    <property type="protein sequence ID" value="AAK14335.1"/>
    <property type="status" value="JOINED"/>
    <property type="molecule type" value="Genomic_DNA"/>
</dbReference>
<dbReference type="EMBL" id="AF178941">
    <property type="protein sequence ID" value="AAG09372.1"/>
    <property type="molecule type" value="mRNA"/>
</dbReference>
<dbReference type="EMBL" id="AL807752">
    <property type="status" value="NOT_ANNOTATED_CDS"/>
    <property type="molecule type" value="Genomic_DNA"/>
</dbReference>
<dbReference type="EMBL" id="AB028985">
    <property type="protein sequence ID" value="BAA83014.2"/>
    <property type="molecule type" value="mRNA"/>
</dbReference>
<dbReference type="EMBL" id="AB177854">
    <property type="protein sequence ID" value="BAD66832.1"/>
    <property type="molecule type" value="mRNA"/>
</dbReference>
<dbReference type="CCDS" id="CCDS43909.1">
    <molecule id="Q9BZC7-3"/>
</dbReference>
<dbReference type="CCDS" id="CCDS94538.1">
    <molecule id="Q9BZC7-1"/>
</dbReference>
<dbReference type="CCDS" id="CCDS94539.1">
    <molecule id="Q9BZC7-4"/>
</dbReference>
<dbReference type="PIR" id="A59189">
    <property type="entry name" value="A59189"/>
</dbReference>
<dbReference type="RefSeq" id="NP_001397971.1">
    <molecule id="Q9BZC7-1"/>
    <property type="nucleotide sequence ID" value="NM_001411042.1"/>
</dbReference>
<dbReference type="RefSeq" id="NP_001597.2">
    <molecule id="Q9BZC7-3"/>
    <property type="nucleotide sequence ID" value="NM_001606.4"/>
</dbReference>
<dbReference type="RefSeq" id="NP_997698.1">
    <molecule id="Q9BZC7-4"/>
    <property type="nucleotide sequence ID" value="NM_212533.3"/>
</dbReference>
<dbReference type="RefSeq" id="XP_006717059.1">
    <property type="nucleotide sequence ID" value="XM_006716996.3"/>
</dbReference>
<dbReference type="SMR" id="Q9BZC7"/>
<dbReference type="BioGRID" id="106538">
    <property type="interactions" value="127"/>
</dbReference>
<dbReference type="FunCoup" id="Q9BZC7">
    <property type="interactions" value="821"/>
</dbReference>
<dbReference type="IntAct" id="Q9BZC7">
    <property type="interactions" value="102"/>
</dbReference>
<dbReference type="MINT" id="Q9BZC7"/>
<dbReference type="STRING" id="9606.ENSP00000344155"/>
<dbReference type="TCDB" id="3.A.1.211.3">
    <property type="family name" value="the atp-binding cassette (abc) superfamily"/>
</dbReference>
<dbReference type="GlyConnect" id="1021">
    <property type="glycosylation" value="2 N-Linked glycans (1 site)"/>
</dbReference>
<dbReference type="GlyCosmos" id="Q9BZC7">
    <property type="glycosylation" value="26 sites, 3 glycans"/>
</dbReference>
<dbReference type="GlyGen" id="Q9BZC7">
    <property type="glycosylation" value="27 sites, 13 N-linked glycans (9 sites), 1 O-linked glycan (1 site)"/>
</dbReference>
<dbReference type="iPTMnet" id="Q9BZC7"/>
<dbReference type="PhosphoSitePlus" id="Q9BZC7"/>
<dbReference type="SwissPalm" id="Q9BZC7"/>
<dbReference type="BioMuta" id="ABCA2"/>
<dbReference type="DMDM" id="206729923"/>
<dbReference type="jPOST" id="Q9BZC7"/>
<dbReference type="MassIVE" id="Q9BZC7"/>
<dbReference type="PaxDb" id="9606-ENSP00000344155"/>
<dbReference type="PeptideAtlas" id="Q9BZC7"/>
<dbReference type="ProteomicsDB" id="79809">
    <molecule id="Q9BZC7-1"/>
</dbReference>
<dbReference type="ProteomicsDB" id="79810">
    <molecule id="Q9BZC7-2"/>
</dbReference>
<dbReference type="ProteomicsDB" id="79811">
    <molecule id="Q9BZC7-3"/>
</dbReference>
<dbReference type="Pumba" id="Q9BZC7"/>
<dbReference type="Antibodypedia" id="32309">
    <property type="antibodies" value="220 antibodies from 26 providers"/>
</dbReference>
<dbReference type="DNASU" id="20"/>
<dbReference type="Ensembl" id="ENST00000341511.11">
    <molecule id="Q9BZC7-3"/>
    <property type="protein sequence ID" value="ENSP00000344155.6"/>
    <property type="gene ID" value="ENSG00000107331.18"/>
</dbReference>
<dbReference type="Ensembl" id="ENST00000371605.7">
    <molecule id="Q9BZC7-1"/>
    <property type="protein sequence ID" value="ENSP00000360666.3"/>
    <property type="gene ID" value="ENSG00000107331.18"/>
</dbReference>
<dbReference type="Ensembl" id="ENST00000614293.5">
    <molecule id="Q9BZC7-4"/>
    <property type="protein sequence ID" value="ENSP00000481105.2"/>
    <property type="gene ID" value="ENSG00000107331.18"/>
</dbReference>
<dbReference type="GeneID" id="20"/>
<dbReference type="KEGG" id="hsa:20"/>
<dbReference type="MANE-Select" id="ENST00000341511.11">
    <molecule id="Q9BZC7-3"/>
    <property type="protein sequence ID" value="ENSP00000344155.6"/>
    <property type="RefSeq nucleotide sequence ID" value="NM_001606.5"/>
    <property type="RefSeq protein sequence ID" value="NP_001597.2"/>
</dbReference>
<dbReference type="UCSC" id="uc011mem.1">
    <molecule id="Q9BZC7-1"/>
    <property type="organism name" value="human"/>
</dbReference>
<dbReference type="AGR" id="HGNC:32"/>
<dbReference type="CTD" id="20"/>
<dbReference type="DisGeNET" id="20"/>
<dbReference type="GeneCards" id="ABCA2"/>
<dbReference type="HGNC" id="HGNC:32">
    <property type="gene designation" value="ABCA2"/>
</dbReference>
<dbReference type="HPA" id="ENSG00000107331">
    <property type="expression patterns" value="Tissue enriched (brain)"/>
</dbReference>
<dbReference type="MalaCards" id="ABCA2"/>
<dbReference type="MIM" id="600047">
    <property type="type" value="gene"/>
</dbReference>
<dbReference type="MIM" id="618808">
    <property type="type" value="phenotype"/>
</dbReference>
<dbReference type="neXtProt" id="NX_Q9BZC7"/>
<dbReference type="OpenTargets" id="ENSG00000107331"/>
<dbReference type="Orphanet" id="88616">
    <property type="disease" value="Autosomal recessive non-syndromic intellectual disability"/>
</dbReference>
<dbReference type="PharmGKB" id="PA24377"/>
<dbReference type="VEuPathDB" id="HostDB:ENSG00000107331"/>
<dbReference type="eggNOG" id="KOG0059">
    <property type="taxonomic scope" value="Eukaryota"/>
</dbReference>
<dbReference type="GeneTree" id="ENSGT00940000158560"/>
<dbReference type="HOGENOM" id="CLU_000604_19_0_1"/>
<dbReference type="InParanoid" id="Q9BZC7"/>
<dbReference type="OMA" id="QYFDSMC"/>
<dbReference type="OrthoDB" id="10255969at2759"/>
<dbReference type="PAN-GO" id="Q9BZC7">
    <property type="GO annotations" value="4 GO annotations based on evolutionary models"/>
</dbReference>
<dbReference type="PhylomeDB" id="Q9BZC7"/>
<dbReference type="TreeFam" id="TF105191"/>
<dbReference type="PathwayCommons" id="Q9BZC7"/>
<dbReference type="Reactome" id="R-HSA-1369062">
    <property type="pathway name" value="ABC transporters in lipid homeostasis"/>
</dbReference>
<dbReference type="SignaLink" id="Q9BZC7"/>
<dbReference type="BioGRID-ORCS" id="20">
    <property type="hits" value="22 hits in 1154 CRISPR screens"/>
</dbReference>
<dbReference type="ChiTaRS" id="ABCA2">
    <property type="organism name" value="human"/>
</dbReference>
<dbReference type="GeneWiki" id="ABCA2"/>
<dbReference type="GenomeRNAi" id="20"/>
<dbReference type="Pharos" id="Q9BZC7">
    <property type="development level" value="Tbio"/>
</dbReference>
<dbReference type="PRO" id="PR:Q9BZC7"/>
<dbReference type="Proteomes" id="UP000005640">
    <property type="component" value="Chromosome 9"/>
</dbReference>
<dbReference type="RNAct" id="Q9BZC7">
    <property type="molecule type" value="protein"/>
</dbReference>
<dbReference type="Bgee" id="ENSG00000107331">
    <property type="expression patterns" value="Expressed in C1 segment of cervical spinal cord and 150 other cell types or tissues"/>
</dbReference>
<dbReference type="ExpressionAtlas" id="Q9BZC7">
    <property type="expression patterns" value="baseline and differential"/>
</dbReference>
<dbReference type="GO" id="GO:0043190">
    <property type="term" value="C:ATP-binding cassette (ABC) transporter complex"/>
    <property type="evidence" value="ECO:0000303"/>
    <property type="project" value="UniProtKB"/>
</dbReference>
<dbReference type="GO" id="GO:0031410">
    <property type="term" value="C:cytoplasmic vesicle"/>
    <property type="evidence" value="ECO:0000250"/>
    <property type="project" value="UniProtKB"/>
</dbReference>
<dbReference type="GO" id="GO:0005768">
    <property type="term" value="C:endosome"/>
    <property type="evidence" value="ECO:0000314"/>
    <property type="project" value="UniProtKB"/>
</dbReference>
<dbReference type="GO" id="GO:0010008">
    <property type="term" value="C:endosome membrane"/>
    <property type="evidence" value="ECO:0000314"/>
    <property type="project" value="UniProtKB"/>
</dbReference>
<dbReference type="GO" id="GO:0043231">
    <property type="term" value="C:intracellular membrane-bounded organelle"/>
    <property type="evidence" value="ECO:0000314"/>
    <property type="project" value="HPA"/>
</dbReference>
<dbReference type="GO" id="GO:0005765">
    <property type="term" value="C:lysosomal membrane"/>
    <property type="evidence" value="ECO:0000314"/>
    <property type="project" value="UniProtKB"/>
</dbReference>
<dbReference type="GO" id="GO:0005764">
    <property type="term" value="C:lysosome"/>
    <property type="evidence" value="ECO:0000314"/>
    <property type="project" value="UniProtKB"/>
</dbReference>
<dbReference type="GO" id="GO:0016020">
    <property type="term" value="C:membrane"/>
    <property type="evidence" value="ECO:0000314"/>
    <property type="project" value="UniProtKB"/>
</dbReference>
<dbReference type="GO" id="GO:0005815">
    <property type="term" value="C:microtubule organizing center"/>
    <property type="evidence" value="ECO:0000250"/>
    <property type="project" value="UniProtKB"/>
</dbReference>
<dbReference type="GO" id="GO:0005886">
    <property type="term" value="C:plasma membrane"/>
    <property type="evidence" value="ECO:0000314"/>
    <property type="project" value="ARUK-UCL"/>
</dbReference>
<dbReference type="GO" id="GO:0140359">
    <property type="term" value="F:ABC-type transporter activity"/>
    <property type="evidence" value="ECO:0007669"/>
    <property type="project" value="InterPro"/>
</dbReference>
<dbReference type="GO" id="GO:0005524">
    <property type="term" value="F:ATP binding"/>
    <property type="evidence" value="ECO:0000314"/>
    <property type="project" value="UniProtKB"/>
</dbReference>
<dbReference type="GO" id="GO:0016887">
    <property type="term" value="F:ATP hydrolysis activity"/>
    <property type="evidence" value="ECO:0007669"/>
    <property type="project" value="InterPro"/>
</dbReference>
<dbReference type="GO" id="GO:0042626">
    <property type="term" value="F:ATPase-coupled transmembrane transporter activity"/>
    <property type="evidence" value="ECO:0000318"/>
    <property type="project" value="GO_Central"/>
</dbReference>
<dbReference type="GO" id="GO:0099038">
    <property type="term" value="F:ceramide floppase activity"/>
    <property type="evidence" value="ECO:0000314"/>
    <property type="project" value="ARUK-UCL"/>
</dbReference>
<dbReference type="GO" id="GO:0061135">
    <property type="term" value="F:endopeptidase regulator activity"/>
    <property type="evidence" value="ECO:0000315"/>
    <property type="project" value="ARUK-UCL"/>
</dbReference>
<dbReference type="GO" id="GO:0005319">
    <property type="term" value="F:lipid transporter activity"/>
    <property type="evidence" value="ECO:0000318"/>
    <property type="project" value="GO_Central"/>
</dbReference>
<dbReference type="GO" id="GO:0000166">
    <property type="term" value="F:nucleotide binding"/>
    <property type="evidence" value="ECO:0000303"/>
    <property type="project" value="UniProtKB"/>
</dbReference>
<dbReference type="GO" id="GO:0032289">
    <property type="term" value="P:central nervous system myelin formation"/>
    <property type="evidence" value="ECO:0000250"/>
    <property type="project" value="UniProtKB"/>
</dbReference>
<dbReference type="GO" id="GO:0099040">
    <property type="term" value="P:ceramide translocation"/>
    <property type="evidence" value="ECO:0000314"/>
    <property type="project" value="ARUK-UCL"/>
</dbReference>
<dbReference type="GO" id="GO:0042632">
    <property type="term" value="P:cholesterol homeostasis"/>
    <property type="evidence" value="ECO:0000270"/>
    <property type="project" value="UniProtKB"/>
</dbReference>
<dbReference type="GO" id="GO:0001573">
    <property type="term" value="P:ganglioside metabolic process"/>
    <property type="evidence" value="ECO:0000250"/>
    <property type="project" value="UniProtKB"/>
</dbReference>
<dbReference type="GO" id="GO:0006687">
    <property type="term" value="P:glycosphingolipid metabolic process"/>
    <property type="evidence" value="ECO:0000250"/>
    <property type="project" value="UniProtKB"/>
</dbReference>
<dbReference type="GO" id="GO:0090156">
    <property type="term" value="P:intracellular sphingolipid homeostasis"/>
    <property type="evidence" value="ECO:0000314"/>
    <property type="project" value="ARUK-UCL"/>
</dbReference>
<dbReference type="GO" id="GO:0006629">
    <property type="term" value="P:lipid metabolic process"/>
    <property type="evidence" value="ECO:0000303"/>
    <property type="project" value="UniProtKB"/>
</dbReference>
<dbReference type="GO" id="GO:0006869">
    <property type="term" value="P:lipid transport"/>
    <property type="evidence" value="ECO:0000318"/>
    <property type="project" value="GO_Central"/>
</dbReference>
<dbReference type="GO" id="GO:0007626">
    <property type="term" value="P:locomotory behavior"/>
    <property type="evidence" value="ECO:0000250"/>
    <property type="project" value="ARUK-UCL"/>
</dbReference>
<dbReference type="GO" id="GO:0090370">
    <property type="term" value="P:negative regulation of cholesterol efflux"/>
    <property type="evidence" value="ECO:0000314"/>
    <property type="project" value="ARUK-UCL"/>
</dbReference>
<dbReference type="GO" id="GO:0032384">
    <property type="term" value="P:negative regulation of intracellular cholesterol transport"/>
    <property type="evidence" value="ECO:0000314"/>
    <property type="project" value="ARUK-UCL"/>
</dbReference>
<dbReference type="GO" id="GO:0071072">
    <property type="term" value="P:negative regulation of phospholipid biosynthetic process"/>
    <property type="evidence" value="ECO:0000314"/>
    <property type="project" value="ARUK-UCL"/>
</dbReference>
<dbReference type="GO" id="GO:1905601">
    <property type="term" value="P:negative regulation of receptor-mediated endocytosis involved in cholesterol transport"/>
    <property type="evidence" value="ECO:0000314"/>
    <property type="project" value="ARUK-UCL"/>
</dbReference>
<dbReference type="GO" id="GO:0090155">
    <property type="term" value="P:negative regulation of sphingolipid biosynthetic process"/>
    <property type="evidence" value="ECO:0000314"/>
    <property type="project" value="ARUK-UCL"/>
</dbReference>
<dbReference type="GO" id="GO:0045939">
    <property type="term" value="P:negative regulation of steroid metabolic process"/>
    <property type="evidence" value="ECO:0000250"/>
    <property type="project" value="ARUK-UCL"/>
</dbReference>
<dbReference type="GO" id="GO:0042986">
    <property type="term" value="P:positive regulation of amyloid precursor protein biosynthetic process"/>
    <property type="evidence" value="ECO:0000314"/>
    <property type="project" value="ARUK-UCL"/>
</dbReference>
<dbReference type="GO" id="GO:1902993">
    <property type="term" value="P:positive regulation of amyloid precursor protein catabolic process"/>
    <property type="evidence" value="ECO:0000315"/>
    <property type="project" value="ARUK-UCL"/>
</dbReference>
<dbReference type="GO" id="GO:1902004">
    <property type="term" value="P:positive regulation of amyloid-beta formation"/>
    <property type="evidence" value="ECO:0000315"/>
    <property type="project" value="ARUK-UCL"/>
</dbReference>
<dbReference type="GO" id="GO:0032805">
    <property type="term" value="P:positive regulation of low-density lipoprotein particle receptor catabolic process"/>
    <property type="evidence" value="ECO:0000314"/>
    <property type="project" value="ARUK-UCL"/>
</dbReference>
<dbReference type="GO" id="GO:0032383">
    <property type="term" value="P:regulation of intracellular cholesterol transport"/>
    <property type="evidence" value="ECO:0000315"/>
    <property type="project" value="UniProtKB"/>
</dbReference>
<dbReference type="GO" id="GO:1901873">
    <property type="term" value="P:regulation of post-translational protein modification"/>
    <property type="evidence" value="ECO:0000315"/>
    <property type="project" value="ARUK-UCL"/>
</dbReference>
<dbReference type="GO" id="GO:0060049">
    <property type="term" value="P:regulation of protein glycosylation"/>
    <property type="evidence" value="ECO:0000250"/>
    <property type="project" value="ARUK-UCL"/>
</dbReference>
<dbReference type="GO" id="GO:1904375">
    <property type="term" value="P:regulation of protein localization to cell periphery"/>
    <property type="evidence" value="ECO:0000250"/>
    <property type="project" value="ARUK-UCL"/>
</dbReference>
<dbReference type="GO" id="GO:2000008">
    <property type="term" value="P:regulation of protein localization to cell surface"/>
    <property type="evidence" value="ECO:0000250"/>
    <property type="project" value="ARUK-UCL"/>
</dbReference>
<dbReference type="GO" id="GO:0019218">
    <property type="term" value="P:regulation of steroid metabolic process"/>
    <property type="evidence" value="ECO:0000314"/>
    <property type="project" value="ARUK-UCL"/>
</dbReference>
<dbReference type="GO" id="GO:0070723">
    <property type="term" value="P:response to cholesterol"/>
    <property type="evidence" value="ECO:0000270"/>
    <property type="project" value="UniProtKB"/>
</dbReference>
<dbReference type="GO" id="GO:0048545">
    <property type="term" value="P:response to steroid hormone"/>
    <property type="evidence" value="ECO:0000270"/>
    <property type="project" value="UniProtKB"/>
</dbReference>
<dbReference type="GO" id="GO:0009410">
    <property type="term" value="P:response to xenobiotic stimulus"/>
    <property type="evidence" value="ECO:0000304"/>
    <property type="project" value="UniProtKB"/>
</dbReference>
<dbReference type="GO" id="GO:0006684">
    <property type="term" value="P:sphingomyelin metabolic process"/>
    <property type="evidence" value="ECO:0000250"/>
    <property type="project" value="UniProtKB"/>
</dbReference>
<dbReference type="GO" id="GO:0046512">
    <property type="term" value="P:sphingosine biosynthetic process"/>
    <property type="evidence" value="ECO:0000314"/>
    <property type="project" value="ARUK-UCL"/>
</dbReference>
<dbReference type="GO" id="GO:0055085">
    <property type="term" value="P:transmembrane transport"/>
    <property type="evidence" value="ECO:0000303"/>
    <property type="project" value="UniProtKB"/>
</dbReference>
<dbReference type="GO" id="GO:0150104">
    <property type="term" value="P:transport across blood-brain barrier"/>
    <property type="evidence" value="ECO:0000303"/>
    <property type="project" value="ARUK-UCL"/>
</dbReference>
<dbReference type="CDD" id="cd03263">
    <property type="entry name" value="ABC_subfamily_A"/>
    <property type="match status" value="2"/>
</dbReference>
<dbReference type="FunFam" id="3.40.50.300:FF:000511">
    <property type="entry name" value="ATP-binding cassette, sub-family A (ABC1), member 2"/>
    <property type="match status" value="1"/>
</dbReference>
<dbReference type="FunFam" id="3.40.50.300:FF:000612">
    <property type="entry name" value="ATP-binding cassette, sub-family A (ABC1), member 2"/>
    <property type="match status" value="1"/>
</dbReference>
<dbReference type="Gene3D" id="3.40.50.300">
    <property type="entry name" value="P-loop containing nucleotide triphosphate hydrolases"/>
    <property type="match status" value="2"/>
</dbReference>
<dbReference type="InterPro" id="IPR003593">
    <property type="entry name" value="AAA+_ATPase"/>
</dbReference>
<dbReference type="InterPro" id="IPR013525">
    <property type="entry name" value="ABC2_TM"/>
</dbReference>
<dbReference type="InterPro" id="IPR003439">
    <property type="entry name" value="ABC_transporter-like_ATP-bd"/>
</dbReference>
<dbReference type="InterPro" id="IPR017871">
    <property type="entry name" value="ABC_transporter-like_CS"/>
</dbReference>
<dbReference type="InterPro" id="IPR026082">
    <property type="entry name" value="ABCA"/>
</dbReference>
<dbReference type="InterPro" id="IPR027417">
    <property type="entry name" value="P-loop_NTPase"/>
</dbReference>
<dbReference type="InterPro" id="IPR056264">
    <property type="entry name" value="R2_ABCA1-4-like"/>
</dbReference>
<dbReference type="PANTHER" id="PTHR19229:SF250">
    <property type="entry name" value="ABC TRANSPORTER DOMAIN-CONTAINING PROTEIN-RELATED"/>
    <property type="match status" value="1"/>
</dbReference>
<dbReference type="PANTHER" id="PTHR19229">
    <property type="entry name" value="ATP-BINDING CASSETTE TRANSPORTER SUBFAMILY A ABCA"/>
    <property type="match status" value="1"/>
</dbReference>
<dbReference type="Pfam" id="PF12698">
    <property type="entry name" value="ABC2_membrane_3"/>
    <property type="match status" value="2"/>
</dbReference>
<dbReference type="Pfam" id="PF00005">
    <property type="entry name" value="ABC_tran"/>
    <property type="match status" value="2"/>
</dbReference>
<dbReference type="Pfam" id="PF23321">
    <property type="entry name" value="R1_ABCA1"/>
    <property type="match status" value="1"/>
</dbReference>
<dbReference type="SMART" id="SM00382">
    <property type="entry name" value="AAA"/>
    <property type="match status" value="2"/>
</dbReference>
<dbReference type="SUPFAM" id="SSF52540">
    <property type="entry name" value="P-loop containing nucleoside triphosphate hydrolases"/>
    <property type="match status" value="2"/>
</dbReference>
<dbReference type="PROSITE" id="PS00211">
    <property type="entry name" value="ABC_TRANSPORTER_1"/>
    <property type="match status" value="1"/>
</dbReference>
<dbReference type="PROSITE" id="PS50893">
    <property type="entry name" value="ABC_TRANSPORTER_2"/>
    <property type="match status" value="2"/>
</dbReference>
<organism>
    <name type="scientific">Homo sapiens</name>
    <name type="common">Human</name>
    <dbReference type="NCBI Taxonomy" id="9606"/>
    <lineage>
        <taxon>Eukaryota</taxon>
        <taxon>Metazoa</taxon>
        <taxon>Chordata</taxon>
        <taxon>Craniata</taxon>
        <taxon>Vertebrata</taxon>
        <taxon>Euteleostomi</taxon>
        <taxon>Mammalia</taxon>
        <taxon>Eutheria</taxon>
        <taxon>Euarchontoglires</taxon>
        <taxon>Primates</taxon>
        <taxon>Haplorrhini</taxon>
        <taxon>Catarrhini</taxon>
        <taxon>Hominidae</taxon>
        <taxon>Homo</taxon>
    </lineage>
</organism>
<reference key="1">
    <citation type="journal article" date="2001" name="Biochem. Biophys. Res. Commun.">
        <title>Complete coding sequence, promoter region, and genomic structure of the human ABCA2 gene and evidence for sterol-dependent regulation in macrophages.</title>
        <authorList>
            <person name="Kaminski W.E."/>
            <person name="Piehler A."/>
            <person name="Pullmann K."/>
            <person name="Porsch-Oezcueruemez M."/>
            <person name="Duong C."/>
            <person name="Bared G.M."/>
            <person name="Buchler C."/>
            <person name="Schmitz G."/>
        </authorList>
    </citation>
    <scope>NUCLEOTIDE SEQUENCE [GENOMIC DNA / MRNA] (ISOFORM 3)</scope>
</reference>
<reference key="2">
    <citation type="journal article" date="2001" name="Cancer Res.">
        <title>Cloning and characterization of human adenosine 5'-triphosphate-binding cassette, sub-family A, transporter 2.</title>
        <authorList>
            <person name="Vulevic B."/>
            <person name="Chen Z."/>
            <person name="Boyd J.T."/>
            <person name="Davis W. Jr."/>
            <person name="Walsh E.S."/>
            <person name="Belinsky M.G."/>
            <person name="Tew K.D."/>
        </authorList>
    </citation>
    <scope>NUCLEOTIDE SEQUENCE [MRNA] (ISOFORM 3)</scope>
    <scope>TISSUE SPECIFICITY</scope>
    <scope>SUBCELLULAR LOCATION</scope>
    <source>
        <tissue>Brain</tissue>
    </source>
</reference>
<reference key="3">
    <citation type="journal article" date="2004" name="Nature">
        <title>DNA sequence and analysis of human chromosome 9.</title>
        <authorList>
            <person name="Humphray S.J."/>
            <person name="Oliver K."/>
            <person name="Hunt A.R."/>
            <person name="Plumb R.W."/>
            <person name="Loveland J.E."/>
            <person name="Howe K.L."/>
            <person name="Andrews T.D."/>
            <person name="Searle S."/>
            <person name="Hunt S.E."/>
            <person name="Scott C.E."/>
            <person name="Jones M.C."/>
            <person name="Ainscough R."/>
            <person name="Almeida J.P."/>
            <person name="Ambrose K.D."/>
            <person name="Ashwell R.I.S."/>
            <person name="Babbage A.K."/>
            <person name="Babbage S."/>
            <person name="Bagguley C.L."/>
            <person name="Bailey J."/>
            <person name="Banerjee R."/>
            <person name="Barker D.J."/>
            <person name="Barlow K.F."/>
            <person name="Bates K."/>
            <person name="Beasley H."/>
            <person name="Beasley O."/>
            <person name="Bird C.P."/>
            <person name="Bray-Allen S."/>
            <person name="Brown A.J."/>
            <person name="Brown J.Y."/>
            <person name="Burford D."/>
            <person name="Burrill W."/>
            <person name="Burton J."/>
            <person name="Carder C."/>
            <person name="Carter N.P."/>
            <person name="Chapman J.C."/>
            <person name="Chen Y."/>
            <person name="Clarke G."/>
            <person name="Clark S.Y."/>
            <person name="Clee C.M."/>
            <person name="Clegg S."/>
            <person name="Collier R.E."/>
            <person name="Corby N."/>
            <person name="Crosier M."/>
            <person name="Cummings A.T."/>
            <person name="Davies J."/>
            <person name="Dhami P."/>
            <person name="Dunn M."/>
            <person name="Dutta I."/>
            <person name="Dyer L.W."/>
            <person name="Earthrowl M.E."/>
            <person name="Faulkner L."/>
            <person name="Fleming C.J."/>
            <person name="Frankish A."/>
            <person name="Frankland J.A."/>
            <person name="French L."/>
            <person name="Fricker D.G."/>
            <person name="Garner P."/>
            <person name="Garnett J."/>
            <person name="Ghori J."/>
            <person name="Gilbert J.G.R."/>
            <person name="Glison C."/>
            <person name="Grafham D.V."/>
            <person name="Gribble S."/>
            <person name="Griffiths C."/>
            <person name="Griffiths-Jones S."/>
            <person name="Grocock R."/>
            <person name="Guy J."/>
            <person name="Hall R.E."/>
            <person name="Hammond S."/>
            <person name="Harley J.L."/>
            <person name="Harrison E.S.I."/>
            <person name="Hart E.A."/>
            <person name="Heath P.D."/>
            <person name="Henderson C.D."/>
            <person name="Hopkins B.L."/>
            <person name="Howard P.J."/>
            <person name="Howden P.J."/>
            <person name="Huckle E."/>
            <person name="Johnson C."/>
            <person name="Johnson D."/>
            <person name="Joy A.A."/>
            <person name="Kay M."/>
            <person name="Keenan S."/>
            <person name="Kershaw J.K."/>
            <person name="Kimberley A.M."/>
            <person name="King A."/>
            <person name="Knights A."/>
            <person name="Laird G.K."/>
            <person name="Langford C."/>
            <person name="Lawlor S."/>
            <person name="Leongamornlert D.A."/>
            <person name="Leversha M."/>
            <person name="Lloyd C."/>
            <person name="Lloyd D.M."/>
            <person name="Lovell J."/>
            <person name="Martin S."/>
            <person name="Mashreghi-Mohammadi M."/>
            <person name="Matthews L."/>
            <person name="McLaren S."/>
            <person name="McLay K.E."/>
            <person name="McMurray A."/>
            <person name="Milne S."/>
            <person name="Nickerson T."/>
            <person name="Nisbett J."/>
            <person name="Nordsiek G."/>
            <person name="Pearce A.V."/>
            <person name="Peck A.I."/>
            <person name="Porter K.M."/>
            <person name="Pandian R."/>
            <person name="Pelan S."/>
            <person name="Phillimore B."/>
            <person name="Povey S."/>
            <person name="Ramsey Y."/>
            <person name="Rand V."/>
            <person name="Scharfe M."/>
            <person name="Sehra H.K."/>
            <person name="Shownkeen R."/>
            <person name="Sims S.K."/>
            <person name="Skuce C.D."/>
            <person name="Smith M."/>
            <person name="Steward C.A."/>
            <person name="Swarbreck D."/>
            <person name="Sycamore N."/>
            <person name="Tester J."/>
            <person name="Thorpe A."/>
            <person name="Tracey A."/>
            <person name="Tromans A."/>
            <person name="Thomas D.W."/>
            <person name="Wall M."/>
            <person name="Wallis J.M."/>
            <person name="West A.P."/>
            <person name="Whitehead S.L."/>
            <person name="Willey D.L."/>
            <person name="Williams S.A."/>
            <person name="Wilming L."/>
            <person name="Wray P.W."/>
            <person name="Young L."/>
            <person name="Ashurst J.L."/>
            <person name="Coulson A."/>
            <person name="Blocker H."/>
            <person name="Durbin R.M."/>
            <person name="Sulston J.E."/>
            <person name="Hubbard T."/>
            <person name="Jackson M.J."/>
            <person name="Bentley D.R."/>
            <person name="Beck S."/>
            <person name="Rogers J."/>
            <person name="Dunham I."/>
        </authorList>
    </citation>
    <scope>NUCLEOTIDE SEQUENCE [LARGE SCALE GENOMIC DNA]</scope>
</reference>
<reference key="4">
    <citation type="journal article" date="1999" name="DNA Res.">
        <title>Prediction of the coding sequences of unidentified human genes. XIV. The complete sequences of 100 new cDNA clones from brain which code for large proteins in vitro.</title>
        <authorList>
            <person name="Kikuno R."/>
            <person name="Nagase T."/>
            <person name="Ishikawa K."/>
            <person name="Hirosawa M."/>
            <person name="Miyajima N."/>
            <person name="Tanaka A."/>
            <person name="Kotani H."/>
            <person name="Nomura N."/>
            <person name="Ohara O."/>
        </authorList>
    </citation>
    <scope>NUCLEOTIDE SEQUENCE [LARGE SCALE MRNA] OF 651-2435 (ISOFORM 2)</scope>
    <scope>NUCLEOTIDE SEQUENCE [LARGE SCALE MRNA] OF 665-2435 (ISOFORM 1)</scope>
    <source>
        <tissue>Brain</tissue>
    </source>
</reference>
<reference key="5">
    <citation type="journal article" date="2002" name="DNA Res.">
        <title>Construction of expression-ready cDNA clones for KIAA genes: manual curation of 330 KIAA cDNA clones.</title>
        <authorList>
            <person name="Nakajima D."/>
            <person name="Okazaki N."/>
            <person name="Yamakawa H."/>
            <person name="Kikuno R."/>
            <person name="Ohara O."/>
            <person name="Nagase T."/>
        </authorList>
    </citation>
    <scope>SEQUENCE REVISION</scope>
</reference>
<reference key="6">
    <citation type="journal article" date="2004" name="Biochim. Biophys. Acta">
        <title>Identification of a novel first exon of the human ABCA2 transporter gene encoding a unique N-terminus.</title>
        <authorList>
            <person name="Ile K.E."/>
            <person name="Davis W. Jr."/>
            <person name="Boyd J.T."/>
            <person name="Soulika A.M."/>
            <person name="Tew K.D."/>
        </authorList>
    </citation>
    <scope>NUCLEOTIDE SEQUENCE [MRNA] OF 1-22 (ISOFORMS 3 AND 4)</scope>
    <scope>SUBCELLULAR LOCATION</scope>
</reference>
<reference key="7">
    <citation type="journal article" date="2004" name="Biochim. Biophys. Acta">
        <title>Human ATP-binding cassette transporter-2 (ABCA2) positively regulates low-density lipoprotein receptor expression and negatively regulates cholesterol esterification in Chinese hamster ovary cells.</title>
        <authorList>
            <person name="Davis W. Jr."/>
            <person name="Boyd J.T."/>
            <person name="Ile K.E."/>
            <person name="Tew K.D."/>
        </authorList>
    </citation>
    <scope>INDUCTION</scope>
    <scope>FUNCTION</scope>
</reference>
<reference key="8">
    <citation type="journal article" date="2005" name="In Vivo">
        <title>Characterization of the ATPase activity of human ATP-binding cassette transporter-2 (ABCA2).</title>
        <authorList>
            <person name="Beljanski V."/>
            <person name="Soulika A."/>
            <person name="Tucker J.M."/>
            <person name="Townsend D.M."/>
            <person name="Davis W. Jr."/>
            <person name="Tew K.D."/>
        </authorList>
    </citation>
    <scope>FUNCTION</scope>
</reference>
<reference key="9">
    <citation type="journal article" date="2006" name="Cell">
        <title>Global, in vivo, and site-specific phosphorylation dynamics in signaling networks.</title>
        <authorList>
            <person name="Olsen J.V."/>
            <person name="Blagoev B."/>
            <person name="Gnad F."/>
            <person name="Macek B."/>
            <person name="Kumar C."/>
            <person name="Mortensen P."/>
            <person name="Mann M."/>
        </authorList>
    </citation>
    <scope>PHOSPHORYLATION [LARGE SCALE ANALYSIS] AT SER-1327 AND SER-1331</scope>
    <scope>IDENTIFICATION BY MASS SPECTROMETRY [LARGE SCALE ANALYSIS]</scope>
    <source>
        <tissue>Cervix carcinoma</tissue>
    </source>
</reference>
<reference key="10">
    <citation type="journal article" date="2008" name="Proc. Natl. Acad. Sci. U.S.A.">
        <title>A quantitative atlas of mitotic phosphorylation.</title>
        <authorList>
            <person name="Dephoure N."/>
            <person name="Zhou C."/>
            <person name="Villen J."/>
            <person name="Beausoleil S.A."/>
            <person name="Bakalarski C.E."/>
            <person name="Elledge S.J."/>
            <person name="Gygi S.P."/>
        </authorList>
    </citation>
    <scope>PHOSPHORYLATION [LARGE SCALE ANALYSIS] AT THR-2412</scope>
    <scope>IDENTIFICATION BY MASS SPECTROMETRY [LARGE SCALE ANALYSIS]</scope>
    <source>
        <tissue>Cervix carcinoma</tissue>
    </source>
</reference>
<reference key="11">
    <citation type="journal article" date="2011" name="Biochim. Biophys. Acta">
        <title>The ATP-binding cassette transporter-2 (ABCA2) regulates cholesterol homeostasis and low-density lipoprotein receptor metabolism in N2a neuroblastoma cells.</title>
        <authorList>
            <person name="Davis W. Jr."/>
        </authorList>
    </citation>
    <scope>FUNCTION</scope>
</reference>
<reference key="12">
    <citation type="journal article" date="2012" name="J. Biol. Chem.">
        <title>Down-regulation of the ATP-binding cassette transporter 2 (Abca2) reduces amyloid-beta production by altering Nicastrin maturation and intracellular localization.</title>
        <authorList>
            <person name="Michaki V."/>
            <person name="Guix F.X."/>
            <person name="Vennekens K."/>
            <person name="Munck S."/>
            <person name="Dingwall C."/>
            <person name="Davis J.B."/>
            <person name="Townsend D.M."/>
            <person name="Tew K.D."/>
            <person name="Feiguin F."/>
            <person name="De Strooper B."/>
            <person name="Dotti C.G."/>
            <person name="Wahle T."/>
        </authorList>
    </citation>
    <scope>FUNCTION</scope>
</reference>
<reference key="13">
    <citation type="journal article" date="2013" name="J. Proteome Res.">
        <title>Toward a comprehensive characterization of a human cancer cell phosphoproteome.</title>
        <authorList>
            <person name="Zhou H."/>
            <person name="Di Palma S."/>
            <person name="Preisinger C."/>
            <person name="Peng M."/>
            <person name="Polat A.N."/>
            <person name="Heck A.J."/>
            <person name="Mohammed S."/>
        </authorList>
    </citation>
    <scope>PHOSPHORYLATION [LARGE SCALE ANALYSIS] AT SER-1238</scope>
    <scope>IDENTIFICATION BY MASS SPECTROMETRY [LARGE SCALE ANALYSIS]</scope>
    <source>
        <tissue>Cervix carcinoma</tissue>
    </source>
</reference>
<reference key="14">
    <citation type="journal article" date="2014" name="Biochim. Biophys. Acta">
        <title>The ATP-binding cassette transporter-2 (ABCA2) regulates esterification of plasma membrane cholesterol by modulation of sphingolipid metabolism.</title>
        <authorList>
            <person name="Davis W. Jr."/>
        </authorList>
    </citation>
    <scope>FUNCTION</scope>
</reference>
<reference key="15">
    <citation type="journal article" date="2014" name="J. Proteomics">
        <title>An enzyme assisted RP-RPLC approach for in-depth analysis of human liver phosphoproteome.</title>
        <authorList>
            <person name="Bian Y."/>
            <person name="Song C."/>
            <person name="Cheng K."/>
            <person name="Dong M."/>
            <person name="Wang F."/>
            <person name="Huang J."/>
            <person name="Sun D."/>
            <person name="Wang L."/>
            <person name="Ye M."/>
            <person name="Zou H."/>
        </authorList>
    </citation>
    <scope>PHOSPHORYLATION [LARGE SCALE ANALYSIS] AT SER-1331</scope>
    <scope>IDENTIFICATION BY MASS SPECTROMETRY [LARGE SCALE ANALYSIS]</scope>
    <source>
        <tissue>Liver</tissue>
    </source>
</reference>
<reference key="16">
    <citation type="journal article" date="2015" name="Curr. Alzheimer Res.">
        <title>The ATP-Binding Cassette Transporter-2 (ABCA2) Overexpression Modulates Sphingosine Levels and Transcription of the Amyloid Precursor Protein (APP) Gene.</title>
        <authorList>
            <person name="Davis W. Jr."/>
        </authorList>
    </citation>
    <scope>FUNCTION</scope>
</reference>
<reference key="17">
    <citation type="journal article" date="2016" name="J. Biol. Chem.">
        <title>Substrate specificity of the HEMK2 protein glutamine methyltransferase and identification of novel substrates.</title>
        <authorList>
            <person name="Kusevic D."/>
            <person name="Kudithipudi S."/>
            <person name="Jeltsch A."/>
        </authorList>
    </citation>
    <scope>METHYLATION AT GLN-271</scope>
    <scope>MUTAGENESIS OF GLN-271</scope>
</reference>
<reference key="18">
    <citation type="journal article" date="2019" name="Mol. Psychiatry">
        <title>Genetics of intellectual disability in consanguineous families.</title>
        <authorList>
            <person name="Hu H."/>
            <person name="Kahrizi K."/>
            <person name="Musante L."/>
            <person name="Fattahi Z."/>
            <person name="Herwig R."/>
            <person name="Hosseini M."/>
            <person name="Oppitz C."/>
            <person name="Abedini S.S."/>
            <person name="Suckow V."/>
            <person name="Larti F."/>
            <person name="Beheshtian M."/>
            <person name="Lipkowitz B."/>
            <person name="Akhtarkhavari T."/>
            <person name="Mehvari S."/>
            <person name="Otto S."/>
            <person name="Mohseni M."/>
            <person name="Arzhangi S."/>
            <person name="Jamali P."/>
            <person name="Mojahedi F."/>
            <person name="Taghdiri M."/>
            <person name="Papari E."/>
            <person name="Soltani Banavandi M.J."/>
            <person name="Akbari S."/>
            <person name="Tonekaboni S.H."/>
            <person name="Dehghani H."/>
            <person name="Ebrahimpour M.R."/>
            <person name="Bader I."/>
            <person name="Davarnia B."/>
            <person name="Cohen M."/>
            <person name="Khodaei H."/>
            <person name="Albrecht B."/>
            <person name="Azimi S."/>
            <person name="Zirn B."/>
            <person name="Bastami M."/>
            <person name="Wieczorek D."/>
            <person name="Bahrami G."/>
            <person name="Keleman K."/>
            <person name="Vahid L.N."/>
            <person name="Tzschach A."/>
            <person name="Gaertner J."/>
            <person name="Gillessen-Kaesbach G."/>
            <person name="Varaghchi J.R."/>
            <person name="Timmermann B."/>
            <person name="Pourfatemi F."/>
            <person name="Jankhah A."/>
            <person name="Chen W."/>
            <person name="Nikuei P."/>
            <person name="Kalscheuer V.M."/>
            <person name="Oladnabi M."/>
            <person name="Wienker T.F."/>
            <person name="Ropers H.H."/>
            <person name="Najmabadi H."/>
        </authorList>
    </citation>
    <scope>INVOLVEMENT IN IDPOGSA</scope>
</reference>
<reference key="19">
    <citation type="journal article" date="2019" name="Genet. Med.">
        <title>Autozygome and high throughput confirmation of disease genes candidacy.</title>
        <authorList>
            <person name="Maddirevula S."/>
            <person name="Alzahrani F."/>
            <person name="Al-Owain M."/>
            <person name="Al Muhaizea M.A."/>
            <person name="Kayyali H.R."/>
            <person name="AlHashem A."/>
            <person name="Rahbeeni Z."/>
            <person name="Al-Otaibi M."/>
            <person name="Alzaidan H.I."/>
            <person name="Balobaid A."/>
            <person name="El Khashab H.Y."/>
            <person name="Bubshait D.K."/>
            <person name="Faden M."/>
            <person name="Yamani S.A."/>
            <person name="Dabbagh O."/>
            <person name="Al-Mureikhi M."/>
            <person name="Jasser A.A."/>
            <person name="Alsaif H.S."/>
            <person name="Alluhaydan I."/>
            <person name="Seidahmed M.Z."/>
            <person name="Alabbasi B.H."/>
            <person name="Almogarri I."/>
            <person name="Kurdi W."/>
            <person name="Akleh H."/>
            <person name="Qari A."/>
            <person name="Al Tala S.M."/>
            <person name="Alhomaidi S."/>
            <person name="Kentab A.Y."/>
            <person name="Salih M.A."/>
            <person name="Chedrawi A."/>
            <person name="Alameer S."/>
            <person name="Tabarki B."/>
            <person name="Shamseldin H.E."/>
            <person name="Patel N."/>
            <person name="Ibrahim N."/>
            <person name="Abdulwahab F."/>
            <person name="Samira M."/>
            <person name="Goljan E."/>
            <person name="Abouelhoda M."/>
            <person name="Meyer B.F."/>
            <person name="Hashem M."/>
            <person name="Shaheen R."/>
            <person name="AlShahwan S."/>
            <person name="Alfadhel M."/>
            <person name="Ben-Omran T."/>
            <person name="Al-Qattan M.M."/>
            <person name="Monies D."/>
            <person name="Alkuraya F.S."/>
        </authorList>
    </citation>
    <scope>VARIANT IDPOGSA 343-ALA--CYS-2435 DEL</scope>
    <scope>INVOLVEMENT IN IDPOGSA</scope>
</reference>
<protein>
    <recommendedName>
        <fullName evidence="19">ATP-binding cassette sub-family A member 2</fullName>
        <ecNumber evidence="21">7.6.2.-</ecNumber>
    </recommendedName>
    <alternativeName>
        <fullName>ATP-binding cassette transporter 2</fullName>
        <shortName>ATP-binding cassette 2</shortName>
    </alternativeName>
</protein>
<gene>
    <name evidence="22" type="primary">ABCA2</name>
    <name type="synonym">ABC2</name>
    <name type="synonym">KIAA1062</name>
</gene>